<sequence>MFELQPSSIVVLVFCVLAIKVCISLIGKTTIQDRIWYLYTIGASKAGHSKFVALAQKREELVRVNKERRAISAQDEYAKWTKLNRQFDKLNSEVNDLAEATSSEKAQISKLVNLAIAATTTAPIWFSRIWYRKVVLFYLPPKVFPYYIEWVLALPFIVTGGVGLTVWMFALNSVLSSLEFLIKFYLEEPVKKPEAPAASEAQTKQ</sequence>
<organism>
    <name type="scientific">Clavispora lusitaniae (strain ATCC 42720)</name>
    <name type="common">Yeast</name>
    <name type="synonym">Candida lusitaniae</name>
    <dbReference type="NCBI Taxonomy" id="306902"/>
    <lineage>
        <taxon>Eukaryota</taxon>
        <taxon>Fungi</taxon>
        <taxon>Dikarya</taxon>
        <taxon>Ascomycota</taxon>
        <taxon>Saccharomycotina</taxon>
        <taxon>Pichiomycetes</taxon>
        <taxon>Metschnikowiaceae</taxon>
        <taxon>Clavispora</taxon>
    </lineage>
</organism>
<reference key="1">
    <citation type="journal article" date="2009" name="Nature">
        <title>Evolution of pathogenicity and sexual reproduction in eight Candida genomes.</title>
        <authorList>
            <person name="Butler G."/>
            <person name="Rasmussen M.D."/>
            <person name="Lin M.F."/>
            <person name="Santos M.A.S."/>
            <person name="Sakthikumar S."/>
            <person name="Munro C.A."/>
            <person name="Rheinbay E."/>
            <person name="Grabherr M."/>
            <person name="Forche A."/>
            <person name="Reedy J.L."/>
            <person name="Agrafioti I."/>
            <person name="Arnaud M.B."/>
            <person name="Bates S."/>
            <person name="Brown A.J.P."/>
            <person name="Brunke S."/>
            <person name="Costanzo M.C."/>
            <person name="Fitzpatrick D.A."/>
            <person name="de Groot P.W.J."/>
            <person name="Harris D."/>
            <person name="Hoyer L.L."/>
            <person name="Hube B."/>
            <person name="Klis F.M."/>
            <person name="Kodira C."/>
            <person name="Lennard N."/>
            <person name="Logue M.E."/>
            <person name="Martin R."/>
            <person name="Neiman A.M."/>
            <person name="Nikolaou E."/>
            <person name="Quail M.A."/>
            <person name="Quinn J."/>
            <person name="Santos M.C."/>
            <person name="Schmitzberger F.F."/>
            <person name="Sherlock G."/>
            <person name="Shah P."/>
            <person name="Silverstein K.A.T."/>
            <person name="Skrzypek M.S."/>
            <person name="Soll D."/>
            <person name="Staggs R."/>
            <person name="Stansfield I."/>
            <person name="Stumpf M.P.H."/>
            <person name="Sudbery P.E."/>
            <person name="Srikantha T."/>
            <person name="Zeng Q."/>
            <person name="Berman J."/>
            <person name="Berriman M."/>
            <person name="Heitman J."/>
            <person name="Gow N.A.R."/>
            <person name="Lorenz M.C."/>
            <person name="Birren B.W."/>
            <person name="Kellis M."/>
            <person name="Cuomo C.A."/>
        </authorList>
    </citation>
    <scope>NUCLEOTIDE SEQUENCE [LARGE SCALE GENOMIC DNA]</scope>
    <source>
        <strain>ATCC 42720</strain>
    </source>
</reference>
<evidence type="ECO:0000255" key="1">
    <source>
        <dbReference type="HAMAP-Rule" id="MF_03113"/>
    </source>
</evidence>
<comment type="function">
    <text evidence="1">Required for the post-translational delivery of tail-anchored (TA) proteins to the endoplasmic reticulum. Together with GET2, acts as a membrane receptor for soluble GET3, which recognizes and selectively binds the transmembrane domain of TA proteins in the cytosol. The GET complex cooperates with the HDEL receptor ERD2 to mediate the ATP-dependent retrieval of resident ER proteins that contain a C-terminal H-D-E-L retention signal from the Golgi to the ER.</text>
</comment>
<comment type="subunit">
    <text evidence="1">Component of the Golgi to ER traffic (GET) complex, which is composed of GET1, GET2 and GET3. Within the complex, GET1 and GET2 form a heterotetramer which is stabilized by phosphatidylinositol binding and which binds to the GET3 homodimer.</text>
</comment>
<comment type="subcellular location">
    <subcellularLocation>
        <location evidence="1">Endoplasmic reticulum membrane</location>
        <topology evidence="1">Multi-pass membrane protein</topology>
    </subcellularLocation>
    <subcellularLocation>
        <location evidence="1">Golgi apparatus membrane</location>
        <topology evidence="1">Multi-pass membrane protein</topology>
    </subcellularLocation>
</comment>
<comment type="similarity">
    <text evidence="1">Belongs to the WRB/GET1 family.</text>
</comment>
<feature type="chain" id="PRO_0000388588" description="Golgi to ER traffic protein 1">
    <location>
        <begin position="1"/>
        <end position="205"/>
    </location>
</feature>
<feature type="topological domain" description="Lumenal" evidence="1">
    <location>
        <begin position="1"/>
        <end position="9"/>
    </location>
</feature>
<feature type="transmembrane region" description="Helical" evidence="1">
    <location>
        <begin position="10"/>
        <end position="29"/>
    </location>
</feature>
<feature type="topological domain" description="Cytoplasmic" evidence="1">
    <location>
        <begin position="30"/>
        <end position="116"/>
    </location>
</feature>
<feature type="transmembrane region" description="Helical" evidence="1">
    <location>
        <begin position="117"/>
        <end position="137"/>
    </location>
</feature>
<feature type="topological domain" description="Lumenal" evidence="1">
    <location>
        <begin position="138"/>
        <end position="161"/>
    </location>
</feature>
<feature type="transmembrane region" description="Helical" evidence="1">
    <location>
        <begin position="162"/>
        <end position="178"/>
    </location>
</feature>
<feature type="topological domain" description="Cytoplasmic" evidence="1">
    <location>
        <begin position="179"/>
        <end position="205"/>
    </location>
</feature>
<feature type="coiled-coil region" evidence="1">
    <location>
        <begin position="53"/>
        <end position="103"/>
    </location>
</feature>
<protein>
    <recommendedName>
        <fullName evidence="1">Golgi to ER traffic protein 1</fullName>
    </recommendedName>
    <alternativeName>
        <fullName evidence="1">Guided entry of tail-anchored proteins 1</fullName>
    </alternativeName>
</protein>
<proteinExistence type="inferred from homology"/>
<accession>C4XXV8</accession>
<keyword id="KW-0175">Coiled coil</keyword>
<keyword id="KW-0256">Endoplasmic reticulum</keyword>
<keyword id="KW-0931">ER-Golgi transport</keyword>
<keyword id="KW-0333">Golgi apparatus</keyword>
<keyword id="KW-0472">Membrane</keyword>
<keyword id="KW-1185">Reference proteome</keyword>
<keyword id="KW-0812">Transmembrane</keyword>
<keyword id="KW-1133">Transmembrane helix</keyword>
<keyword id="KW-0813">Transport</keyword>
<gene>
    <name evidence="1" type="primary">GET1</name>
    <name type="ORF">CLUG_00781</name>
</gene>
<name>GET1_CLAL4</name>
<dbReference type="EMBL" id="CH408076">
    <property type="protein sequence ID" value="EEQ36658.1"/>
    <property type="molecule type" value="Genomic_DNA"/>
</dbReference>
<dbReference type="RefSeq" id="XP_002619622.1">
    <property type="nucleotide sequence ID" value="XM_002619576.1"/>
</dbReference>
<dbReference type="SMR" id="C4XXV8"/>
<dbReference type="FunCoup" id="C4XXV8">
    <property type="interactions" value="36"/>
</dbReference>
<dbReference type="STRING" id="306902.C4XXV8"/>
<dbReference type="GeneID" id="8500210"/>
<dbReference type="KEGG" id="clu:CLUG_00781"/>
<dbReference type="VEuPathDB" id="FungiDB:CLUG_00781"/>
<dbReference type="HOGENOM" id="CLU_089418_2_0_1"/>
<dbReference type="InParanoid" id="C4XXV8"/>
<dbReference type="OMA" id="AEWIISF"/>
<dbReference type="OrthoDB" id="100376at4891"/>
<dbReference type="Proteomes" id="UP000007703">
    <property type="component" value="Unassembled WGS sequence"/>
</dbReference>
<dbReference type="GO" id="GO:0005789">
    <property type="term" value="C:endoplasmic reticulum membrane"/>
    <property type="evidence" value="ECO:0007669"/>
    <property type="project" value="UniProtKB-SubCell"/>
</dbReference>
<dbReference type="GO" id="GO:0043529">
    <property type="term" value="C:GET complex"/>
    <property type="evidence" value="ECO:0007669"/>
    <property type="project" value="UniProtKB-UniRule"/>
</dbReference>
<dbReference type="GO" id="GO:0000139">
    <property type="term" value="C:Golgi membrane"/>
    <property type="evidence" value="ECO:0007669"/>
    <property type="project" value="UniProtKB-SubCell"/>
</dbReference>
<dbReference type="GO" id="GO:0043495">
    <property type="term" value="F:protein-membrane adaptor activity"/>
    <property type="evidence" value="ECO:0007669"/>
    <property type="project" value="TreeGrafter"/>
</dbReference>
<dbReference type="GO" id="GO:0071816">
    <property type="term" value="P:tail-anchored membrane protein insertion into ER membrane"/>
    <property type="evidence" value="ECO:0007669"/>
    <property type="project" value="InterPro"/>
</dbReference>
<dbReference type="GO" id="GO:0016192">
    <property type="term" value="P:vesicle-mediated transport"/>
    <property type="evidence" value="ECO:0007669"/>
    <property type="project" value="UniProtKB-KW"/>
</dbReference>
<dbReference type="Gene3D" id="1.10.287.660">
    <property type="entry name" value="Helix hairpin bin"/>
    <property type="match status" value="1"/>
</dbReference>
<dbReference type="HAMAP" id="MF_03113">
    <property type="entry name" value="Get1"/>
    <property type="match status" value="1"/>
</dbReference>
<dbReference type="InterPro" id="IPR028945">
    <property type="entry name" value="Get1"/>
</dbReference>
<dbReference type="InterPro" id="IPR027538">
    <property type="entry name" value="Get1_fungi"/>
</dbReference>
<dbReference type="InterPro" id="IPR029012">
    <property type="entry name" value="Helix_hairpin_bin_sf"/>
</dbReference>
<dbReference type="PANTHER" id="PTHR42650:SF1">
    <property type="entry name" value="GUIDED ENTRY OF TAIL-ANCHORED PROTEINS FACTOR 1"/>
    <property type="match status" value="1"/>
</dbReference>
<dbReference type="PANTHER" id="PTHR42650">
    <property type="entry name" value="TAIL-ANCHORED PROTEIN INSERTION RECEPTOR WRB"/>
    <property type="match status" value="1"/>
</dbReference>
<dbReference type="Pfam" id="PF04420">
    <property type="entry name" value="CHD5"/>
    <property type="match status" value="1"/>
</dbReference>